<reference key="1">
    <citation type="journal article" date="2006" name="Nat. Biotechnol.">
        <title>The genome and transcriptomes of the anti-tumor agent Clostridium novyi-NT.</title>
        <authorList>
            <person name="Bettegowda C."/>
            <person name="Huang X."/>
            <person name="Lin J."/>
            <person name="Cheong I."/>
            <person name="Kohli M."/>
            <person name="Szabo S.A."/>
            <person name="Zhang X."/>
            <person name="Diaz L.A. Jr."/>
            <person name="Velculescu V.E."/>
            <person name="Parmigiani G."/>
            <person name="Kinzler K.W."/>
            <person name="Vogelstein B."/>
            <person name="Zhou S."/>
        </authorList>
    </citation>
    <scope>NUCLEOTIDE SEQUENCE [LARGE SCALE GENOMIC DNA]</scope>
    <source>
        <strain>NT</strain>
    </source>
</reference>
<feature type="chain" id="PRO_1000001392" description="Holliday junction branch migration complex subunit RuvB">
    <location>
        <begin position="1"/>
        <end position="337"/>
    </location>
</feature>
<feature type="region of interest" description="Large ATPase domain (RuvB-L)" evidence="1">
    <location>
        <begin position="1"/>
        <end position="182"/>
    </location>
</feature>
<feature type="region of interest" description="Small ATPAse domain (RuvB-S)" evidence="1">
    <location>
        <begin position="183"/>
        <end position="253"/>
    </location>
</feature>
<feature type="region of interest" description="Head domain (RuvB-H)" evidence="1">
    <location>
        <begin position="256"/>
        <end position="337"/>
    </location>
</feature>
<feature type="binding site" evidence="1">
    <location>
        <position position="21"/>
    </location>
    <ligand>
        <name>ATP</name>
        <dbReference type="ChEBI" id="CHEBI:30616"/>
    </ligand>
</feature>
<feature type="binding site" evidence="1">
    <location>
        <position position="22"/>
    </location>
    <ligand>
        <name>ATP</name>
        <dbReference type="ChEBI" id="CHEBI:30616"/>
    </ligand>
</feature>
<feature type="binding site" evidence="1">
    <location>
        <position position="63"/>
    </location>
    <ligand>
        <name>ATP</name>
        <dbReference type="ChEBI" id="CHEBI:30616"/>
    </ligand>
</feature>
<feature type="binding site" evidence="1">
    <location>
        <position position="66"/>
    </location>
    <ligand>
        <name>ATP</name>
        <dbReference type="ChEBI" id="CHEBI:30616"/>
    </ligand>
</feature>
<feature type="binding site" evidence="1">
    <location>
        <position position="67"/>
    </location>
    <ligand>
        <name>ATP</name>
        <dbReference type="ChEBI" id="CHEBI:30616"/>
    </ligand>
</feature>
<feature type="binding site" evidence="1">
    <location>
        <position position="67"/>
    </location>
    <ligand>
        <name>Mg(2+)</name>
        <dbReference type="ChEBI" id="CHEBI:18420"/>
    </ligand>
</feature>
<feature type="binding site" evidence="1">
    <location>
        <position position="68"/>
    </location>
    <ligand>
        <name>ATP</name>
        <dbReference type="ChEBI" id="CHEBI:30616"/>
    </ligand>
</feature>
<feature type="binding site" evidence="1">
    <location>
        <position position="172"/>
    </location>
    <ligand>
        <name>ATP</name>
        <dbReference type="ChEBI" id="CHEBI:30616"/>
    </ligand>
</feature>
<feature type="binding site" evidence="1">
    <location>
        <position position="182"/>
    </location>
    <ligand>
        <name>ATP</name>
        <dbReference type="ChEBI" id="CHEBI:30616"/>
    </ligand>
</feature>
<feature type="binding site" evidence="1">
    <location>
        <position position="219"/>
    </location>
    <ligand>
        <name>ATP</name>
        <dbReference type="ChEBI" id="CHEBI:30616"/>
    </ligand>
</feature>
<feature type="binding site" evidence="1">
    <location>
        <position position="311"/>
    </location>
    <ligand>
        <name>DNA</name>
        <dbReference type="ChEBI" id="CHEBI:16991"/>
    </ligand>
</feature>
<feature type="binding site" evidence="1">
    <location>
        <position position="316"/>
    </location>
    <ligand>
        <name>DNA</name>
        <dbReference type="ChEBI" id="CHEBI:16991"/>
    </ligand>
</feature>
<comment type="function">
    <text evidence="1">The RuvA-RuvB-RuvC complex processes Holliday junction (HJ) DNA during genetic recombination and DNA repair, while the RuvA-RuvB complex plays an important role in the rescue of blocked DNA replication forks via replication fork reversal (RFR). RuvA specifically binds to HJ cruciform DNA, conferring on it an open structure. The RuvB hexamer acts as an ATP-dependent pump, pulling dsDNA into and through the RuvAB complex. RuvB forms 2 homohexamers on either side of HJ DNA bound by 1 or 2 RuvA tetramers; 4 subunits per hexamer contact DNA at a time. Coordinated motions by a converter formed by DNA-disengaged RuvB subunits stimulates ATP hydrolysis and nucleotide exchange. Immobilization of the converter enables RuvB to convert the ATP-contained energy into a lever motion, pulling 2 nucleotides of DNA out of the RuvA tetramer per ATP hydrolyzed, thus driving DNA branch migration. The RuvB motors rotate together with the DNA substrate, which together with the progressing nucleotide cycle form the mechanistic basis for DNA recombination by continuous HJ branch migration. Branch migration allows RuvC to scan DNA until it finds its consensus sequence, where it cleaves and resolves cruciform DNA.</text>
</comment>
<comment type="catalytic activity">
    <reaction evidence="1">
        <text>ATP + H2O = ADP + phosphate + H(+)</text>
        <dbReference type="Rhea" id="RHEA:13065"/>
        <dbReference type="ChEBI" id="CHEBI:15377"/>
        <dbReference type="ChEBI" id="CHEBI:15378"/>
        <dbReference type="ChEBI" id="CHEBI:30616"/>
        <dbReference type="ChEBI" id="CHEBI:43474"/>
        <dbReference type="ChEBI" id="CHEBI:456216"/>
    </reaction>
</comment>
<comment type="subunit">
    <text evidence="1">Homohexamer. Forms an RuvA(8)-RuvB(12)-Holliday junction (HJ) complex. HJ DNA is sandwiched between 2 RuvA tetramers; dsDNA enters through RuvA and exits via RuvB. An RuvB hexamer assembles on each DNA strand where it exits the tetramer. Each RuvB hexamer is contacted by two RuvA subunits (via domain III) on 2 adjacent RuvB subunits; this complex drives branch migration. In the full resolvosome a probable DNA-RuvA(4)-RuvB(12)-RuvC(2) complex forms which resolves the HJ.</text>
</comment>
<comment type="subcellular location">
    <subcellularLocation>
        <location evidence="1">Cytoplasm</location>
    </subcellularLocation>
</comment>
<comment type="domain">
    <text evidence="1">Has 3 domains, the large (RuvB-L) and small ATPase (RuvB-S) domains and the C-terminal head (RuvB-H) domain. The head domain binds DNA, while the ATPase domains jointly bind ATP, ADP or are empty depending on the state of the subunit in the translocation cycle. During a single DNA translocation step the structure of each domain remains the same, but their relative positions change.</text>
</comment>
<comment type="similarity">
    <text evidence="1">Belongs to the RuvB family.</text>
</comment>
<protein>
    <recommendedName>
        <fullName evidence="1">Holliday junction branch migration complex subunit RuvB</fullName>
        <ecNumber evidence="1">3.6.4.-</ecNumber>
    </recommendedName>
</protein>
<accession>A0PZV4</accession>
<keyword id="KW-0067">ATP-binding</keyword>
<keyword id="KW-0963">Cytoplasm</keyword>
<keyword id="KW-0227">DNA damage</keyword>
<keyword id="KW-0233">DNA recombination</keyword>
<keyword id="KW-0234">DNA repair</keyword>
<keyword id="KW-0238">DNA-binding</keyword>
<keyword id="KW-0378">Hydrolase</keyword>
<keyword id="KW-0547">Nucleotide-binding</keyword>
<keyword id="KW-1185">Reference proteome</keyword>
<dbReference type="EC" id="3.6.4.-" evidence="1"/>
<dbReference type="EMBL" id="CP000382">
    <property type="protein sequence ID" value="ABK61548.1"/>
    <property type="molecule type" value="Genomic_DNA"/>
</dbReference>
<dbReference type="SMR" id="A0PZV4"/>
<dbReference type="STRING" id="386415.NT01CX_1833"/>
<dbReference type="KEGG" id="cno:NT01CX_1833"/>
<dbReference type="eggNOG" id="COG2255">
    <property type="taxonomic scope" value="Bacteria"/>
</dbReference>
<dbReference type="HOGENOM" id="CLU_055599_1_0_9"/>
<dbReference type="Proteomes" id="UP000008220">
    <property type="component" value="Chromosome"/>
</dbReference>
<dbReference type="GO" id="GO:0005737">
    <property type="term" value="C:cytoplasm"/>
    <property type="evidence" value="ECO:0007669"/>
    <property type="project" value="UniProtKB-SubCell"/>
</dbReference>
<dbReference type="GO" id="GO:0048476">
    <property type="term" value="C:Holliday junction resolvase complex"/>
    <property type="evidence" value="ECO:0007669"/>
    <property type="project" value="UniProtKB-UniRule"/>
</dbReference>
<dbReference type="GO" id="GO:0005524">
    <property type="term" value="F:ATP binding"/>
    <property type="evidence" value="ECO:0007669"/>
    <property type="project" value="UniProtKB-UniRule"/>
</dbReference>
<dbReference type="GO" id="GO:0016887">
    <property type="term" value="F:ATP hydrolysis activity"/>
    <property type="evidence" value="ECO:0007669"/>
    <property type="project" value="InterPro"/>
</dbReference>
<dbReference type="GO" id="GO:0000400">
    <property type="term" value="F:four-way junction DNA binding"/>
    <property type="evidence" value="ECO:0007669"/>
    <property type="project" value="UniProtKB-UniRule"/>
</dbReference>
<dbReference type="GO" id="GO:0009378">
    <property type="term" value="F:four-way junction helicase activity"/>
    <property type="evidence" value="ECO:0007669"/>
    <property type="project" value="InterPro"/>
</dbReference>
<dbReference type="GO" id="GO:0006310">
    <property type="term" value="P:DNA recombination"/>
    <property type="evidence" value="ECO:0007669"/>
    <property type="project" value="UniProtKB-UniRule"/>
</dbReference>
<dbReference type="GO" id="GO:0006281">
    <property type="term" value="P:DNA repair"/>
    <property type="evidence" value="ECO:0007669"/>
    <property type="project" value="UniProtKB-UniRule"/>
</dbReference>
<dbReference type="CDD" id="cd00009">
    <property type="entry name" value="AAA"/>
    <property type="match status" value="1"/>
</dbReference>
<dbReference type="Gene3D" id="1.10.8.60">
    <property type="match status" value="1"/>
</dbReference>
<dbReference type="Gene3D" id="3.40.50.300">
    <property type="entry name" value="P-loop containing nucleotide triphosphate hydrolases"/>
    <property type="match status" value="1"/>
</dbReference>
<dbReference type="Gene3D" id="1.10.10.10">
    <property type="entry name" value="Winged helix-like DNA-binding domain superfamily/Winged helix DNA-binding domain"/>
    <property type="match status" value="1"/>
</dbReference>
<dbReference type="HAMAP" id="MF_00016">
    <property type="entry name" value="DNA_HJ_migration_RuvB"/>
    <property type="match status" value="1"/>
</dbReference>
<dbReference type="InterPro" id="IPR003593">
    <property type="entry name" value="AAA+_ATPase"/>
</dbReference>
<dbReference type="InterPro" id="IPR041445">
    <property type="entry name" value="AAA_lid_4"/>
</dbReference>
<dbReference type="InterPro" id="IPR004605">
    <property type="entry name" value="DNA_helicase_Holl-junc_RuvB"/>
</dbReference>
<dbReference type="InterPro" id="IPR027417">
    <property type="entry name" value="P-loop_NTPase"/>
</dbReference>
<dbReference type="InterPro" id="IPR008824">
    <property type="entry name" value="RuvB-like_N"/>
</dbReference>
<dbReference type="InterPro" id="IPR008823">
    <property type="entry name" value="RuvB_C"/>
</dbReference>
<dbReference type="InterPro" id="IPR036388">
    <property type="entry name" value="WH-like_DNA-bd_sf"/>
</dbReference>
<dbReference type="InterPro" id="IPR036390">
    <property type="entry name" value="WH_DNA-bd_sf"/>
</dbReference>
<dbReference type="NCBIfam" id="NF000868">
    <property type="entry name" value="PRK00080.1"/>
    <property type="match status" value="1"/>
</dbReference>
<dbReference type="NCBIfam" id="TIGR00635">
    <property type="entry name" value="ruvB"/>
    <property type="match status" value="1"/>
</dbReference>
<dbReference type="PANTHER" id="PTHR42848">
    <property type="match status" value="1"/>
</dbReference>
<dbReference type="PANTHER" id="PTHR42848:SF1">
    <property type="entry name" value="HOLLIDAY JUNCTION BRANCH MIGRATION COMPLEX SUBUNIT RUVB"/>
    <property type="match status" value="1"/>
</dbReference>
<dbReference type="Pfam" id="PF17864">
    <property type="entry name" value="AAA_lid_4"/>
    <property type="match status" value="1"/>
</dbReference>
<dbReference type="Pfam" id="PF05491">
    <property type="entry name" value="RuvB_C"/>
    <property type="match status" value="1"/>
</dbReference>
<dbReference type="Pfam" id="PF05496">
    <property type="entry name" value="RuvB_N"/>
    <property type="match status" value="1"/>
</dbReference>
<dbReference type="SMART" id="SM00382">
    <property type="entry name" value="AAA"/>
    <property type="match status" value="1"/>
</dbReference>
<dbReference type="SUPFAM" id="SSF52540">
    <property type="entry name" value="P-loop containing nucleoside triphosphate hydrolases"/>
    <property type="match status" value="1"/>
</dbReference>
<dbReference type="SUPFAM" id="SSF46785">
    <property type="entry name" value="Winged helix' DNA-binding domain"/>
    <property type="match status" value="1"/>
</dbReference>
<evidence type="ECO:0000255" key="1">
    <source>
        <dbReference type="HAMAP-Rule" id="MF_00016"/>
    </source>
</evidence>
<name>RUVB_CLONN</name>
<gene>
    <name evidence="1" type="primary">ruvB</name>
    <name type="ordered locus">NT01CX_1833</name>
</gene>
<proteinExistence type="inferred from homology"/>
<organism>
    <name type="scientific">Clostridium novyi (strain NT)</name>
    <dbReference type="NCBI Taxonomy" id="386415"/>
    <lineage>
        <taxon>Bacteria</taxon>
        <taxon>Bacillati</taxon>
        <taxon>Bacillota</taxon>
        <taxon>Clostridia</taxon>
        <taxon>Eubacteriales</taxon>
        <taxon>Clostridiaceae</taxon>
        <taxon>Clostridium</taxon>
    </lineage>
</organism>
<sequence length="337" mass="37871">MEDRMVSASYKNEDFDVEHSLRPEKLSEYIGQDKVKEKLSIFTKAAKMRNEALDHVLLYGPPGLGKTTLANIIAREMGGTLKVTSGPAIERPGDMAAILTSLNDYDVLFIDEIHRLNRTVEEIMYPAMEDNVLDIVIGKGAAAKSIRLDLPKFTLIGATTRVGLLTSPLRDRFGVLSAMEFYNEDELKEIILRSSKILGVVTTEEAAFEIARRSRGTPRIANRLLKRVRDYCDVKGDGVIDINIAKNALSLLEIDGEGFDKIDNKILEAIIDNFKGGPVGLETLAYFIGEELDTIQDVYEPYLLQKGFIVRMPRGRKATEKAYRHLKREFKEQTKLT</sequence>